<comment type="interaction">
    <interactant intactId="EBI-11305258">
        <id>Q96GU1</id>
    </interactant>
    <interactant intactId="EBI-16439278">
        <id>Q6FHY5</id>
        <label>MEOX2</label>
    </interactant>
    <organismsDiffer>false</organismsDiffer>
    <experiments>3</experiments>
</comment>
<comment type="interaction">
    <interactant intactId="EBI-11305258">
        <id>Q96GU1</id>
    </interactant>
    <interactant intactId="EBI-752420">
        <id>Q9NUX5</id>
        <label>POT1</label>
    </interactant>
    <organismsDiffer>false</organismsDiffer>
    <experiments>2</experiments>
</comment>
<comment type="alternative products">
    <event type="alternative splicing"/>
    <isoform>
        <id>Q96GU1-1</id>
        <name>1</name>
        <sequence type="displayed"/>
    </isoform>
    <isoform>
        <id>Q96GU1-2</id>
        <name>2</name>
        <sequence type="described" ref="VSP_042547"/>
    </isoform>
</comment>
<comment type="similarity">
    <text evidence="3">Belongs to the GAGE family.</text>
</comment>
<proteinExistence type="evidence at protein level"/>
<accession>Q96GU1</accession>
<accession>Q2NL97</accession>
<accession>Q5JUL0</accession>
<accession>Q8WWL9</accession>
<keyword id="KW-0025">Alternative splicing</keyword>
<keyword id="KW-0597">Phosphoprotein</keyword>
<keyword id="KW-1267">Proteomics identification</keyword>
<keyword id="KW-1185">Reference proteome</keyword>
<evidence type="ECO:0000256" key="1">
    <source>
        <dbReference type="SAM" id="MobiDB-lite"/>
    </source>
</evidence>
<evidence type="ECO:0000303" key="2">
    <source>
    </source>
</evidence>
<evidence type="ECO:0000305" key="3"/>
<evidence type="ECO:0007744" key="4">
    <source>
    </source>
</evidence>
<reference key="1">
    <citation type="journal article" date="2002" name="Int. J. Cancer">
        <title>The XAGE family of cancer/testis-associated genes: alignment and expression profile in normal tissues, melanoma lesions and Ewing's sarcoma.</title>
        <authorList>
            <person name="Zendman A.J.W."/>
            <person name="van Kraats A.A."/>
            <person name="Weidle U.H."/>
            <person name="Ruiter D.J."/>
            <person name="van Muijen G.N.P."/>
        </authorList>
    </citation>
    <scope>NUCLEOTIDE SEQUENCE [MRNA] (ISOFORM 1)</scope>
</reference>
<reference key="2">
    <citation type="journal article" date="2005" name="Nature">
        <title>The DNA sequence of the human X chromosome.</title>
        <authorList>
            <person name="Ross M.T."/>
            <person name="Grafham D.V."/>
            <person name="Coffey A.J."/>
            <person name="Scherer S."/>
            <person name="McLay K."/>
            <person name="Muzny D."/>
            <person name="Platzer M."/>
            <person name="Howell G.R."/>
            <person name="Burrows C."/>
            <person name="Bird C.P."/>
            <person name="Frankish A."/>
            <person name="Lovell F.L."/>
            <person name="Howe K.L."/>
            <person name="Ashurst J.L."/>
            <person name="Fulton R.S."/>
            <person name="Sudbrak R."/>
            <person name="Wen G."/>
            <person name="Jones M.C."/>
            <person name="Hurles M.E."/>
            <person name="Andrews T.D."/>
            <person name="Scott C.E."/>
            <person name="Searle S."/>
            <person name="Ramser J."/>
            <person name="Whittaker A."/>
            <person name="Deadman R."/>
            <person name="Carter N.P."/>
            <person name="Hunt S.E."/>
            <person name="Chen R."/>
            <person name="Cree A."/>
            <person name="Gunaratne P."/>
            <person name="Havlak P."/>
            <person name="Hodgson A."/>
            <person name="Metzker M.L."/>
            <person name="Richards S."/>
            <person name="Scott G."/>
            <person name="Steffen D."/>
            <person name="Sodergren E."/>
            <person name="Wheeler D.A."/>
            <person name="Worley K.C."/>
            <person name="Ainscough R."/>
            <person name="Ambrose K.D."/>
            <person name="Ansari-Lari M.A."/>
            <person name="Aradhya S."/>
            <person name="Ashwell R.I."/>
            <person name="Babbage A.K."/>
            <person name="Bagguley C.L."/>
            <person name="Ballabio A."/>
            <person name="Banerjee R."/>
            <person name="Barker G.E."/>
            <person name="Barlow K.F."/>
            <person name="Barrett I.P."/>
            <person name="Bates K.N."/>
            <person name="Beare D.M."/>
            <person name="Beasley H."/>
            <person name="Beasley O."/>
            <person name="Beck A."/>
            <person name="Bethel G."/>
            <person name="Blechschmidt K."/>
            <person name="Brady N."/>
            <person name="Bray-Allen S."/>
            <person name="Bridgeman A.M."/>
            <person name="Brown A.J."/>
            <person name="Brown M.J."/>
            <person name="Bonnin D."/>
            <person name="Bruford E.A."/>
            <person name="Buhay C."/>
            <person name="Burch P."/>
            <person name="Burford D."/>
            <person name="Burgess J."/>
            <person name="Burrill W."/>
            <person name="Burton J."/>
            <person name="Bye J.M."/>
            <person name="Carder C."/>
            <person name="Carrel L."/>
            <person name="Chako J."/>
            <person name="Chapman J.C."/>
            <person name="Chavez D."/>
            <person name="Chen E."/>
            <person name="Chen G."/>
            <person name="Chen Y."/>
            <person name="Chen Z."/>
            <person name="Chinault C."/>
            <person name="Ciccodicola A."/>
            <person name="Clark S.Y."/>
            <person name="Clarke G."/>
            <person name="Clee C.M."/>
            <person name="Clegg S."/>
            <person name="Clerc-Blankenburg K."/>
            <person name="Clifford K."/>
            <person name="Cobley V."/>
            <person name="Cole C.G."/>
            <person name="Conquer J.S."/>
            <person name="Corby N."/>
            <person name="Connor R.E."/>
            <person name="David R."/>
            <person name="Davies J."/>
            <person name="Davis C."/>
            <person name="Davis J."/>
            <person name="Delgado O."/>
            <person name="Deshazo D."/>
            <person name="Dhami P."/>
            <person name="Ding Y."/>
            <person name="Dinh H."/>
            <person name="Dodsworth S."/>
            <person name="Draper H."/>
            <person name="Dugan-Rocha S."/>
            <person name="Dunham A."/>
            <person name="Dunn M."/>
            <person name="Durbin K.J."/>
            <person name="Dutta I."/>
            <person name="Eades T."/>
            <person name="Ellwood M."/>
            <person name="Emery-Cohen A."/>
            <person name="Errington H."/>
            <person name="Evans K.L."/>
            <person name="Faulkner L."/>
            <person name="Francis F."/>
            <person name="Frankland J."/>
            <person name="Fraser A.E."/>
            <person name="Galgoczy P."/>
            <person name="Gilbert J."/>
            <person name="Gill R."/>
            <person name="Gloeckner G."/>
            <person name="Gregory S.G."/>
            <person name="Gribble S."/>
            <person name="Griffiths C."/>
            <person name="Grocock R."/>
            <person name="Gu Y."/>
            <person name="Gwilliam R."/>
            <person name="Hamilton C."/>
            <person name="Hart E.A."/>
            <person name="Hawes A."/>
            <person name="Heath P.D."/>
            <person name="Heitmann K."/>
            <person name="Hennig S."/>
            <person name="Hernandez J."/>
            <person name="Hinzmann B."/>
            <person name="Ho S."/>
            <person name="Hoffs M."/>
            <person name="Howden P.J."/>
            <person name="Huckle E.J."/>
            <person name="Hume J."/>
            <person name="Hunt P.J."/>
            <person name="Hunt A.R."/>
            <person name="Isherwood J."/>
            <person name="Jacob L."/>
            <person name="Johnson D."/>
            <person name="Jones S."/>
            <person name="de Jong P.J."/>
            <person name="Joseph S.S."/>
            <person name="Keenan S."/>
            <person name="Kelly S."/>
            <person name="Kershaw J.K."/>
            <person name="Khan Z."/>
            <person name="Kioschis P."/>
            <person name="Klages S."/>
            <person name="Knights A.J."/>
            <person name="Kosiura A."/>
            <person name="Kovar-Smith C."/>
            <person name="Laird G.K."/>
            <person name="Langford C."/>
            <person name="Lawlor S."/>
            <person name="Leversha M."/>
            <person name="Lewis L."/>
            <person name="Liu W."/>
            <person name="Lloyd C."/>
            <person name="Lloyd D.M."/>
            <person name="Loulseged H."/>
            <person name="Loveland J.E."/>
            <person name="Lovell J.D."/>
            <person name="Lozado R."/>
            <person name="Lu J."/>
            <person name="Lyne R."/>
            <person name="Ma J."/>
            <person name="Maheshwari M."/>
            <person name="Matthews L.H."/>
            <person name="McDowall J."/>
            <person name="McLaren S."/>
            <person name="McMurray A."/>
            <person name="Meidl P."/>
            <person name="Meitinger T."/>
            <person name="Milne S."/>
            <person name="Miner G."/>
            <person name="Mistry S.L."/>
            <person name="Morgan M."/>
            <person name="Morris S."/>
            <person name="Mueller I."/>
            <person name="Mullikin J.C."/>
            <person name="Nguyen N."/>
            <person name="Nordsiek G."/>
            <person name="Nyakatura G."/>
            <person name="O'dell C.N."/>
            <person name="Okwuonu G."/>
            <person name="Palmer S."/>
            <person name="Pandian R."/>
            <person name="Parker D."/>
            <person name="Parrish J."/>
            <person name="Pasternak S."/>
            <person name="Patel D."/>
            <person name="Pearce A.V."/>
            <person name="Pearson D.M."/>
            <person name="Pelan S.E."/>
            <person name="Perez L."/>
            <person name="Porter K.M."/>
            <person name="Ramsey Y."/>
            <person name="Reichwald K."/>
            <person name="Rhodes S."/>
            <person name="Ridler K.A."/>
            <person name="Schlessinger D."/>
            <person name="Schueler M.G."/>
            <person name="Sehra H.K."/>
            <person name="Shaw-Smith C."/>
            <person name="Shen H."/>
            <person name="Sheridan E.M."/>
            <person name="Shownkeen R."/>
            <person name="Skuce C.D."/>
            <person name="Smith M.L."/>
            <person name="Sotheran E.C."/>
            <person name="Steingruber H.E."/>
            <person name="Steward C.A."/>
            <person name="Storey R."/>
            <person name="Swann R.M."/>
            <person name="Swarbreck D."/>
            <person name="Tabor P.E."/>
            <person name="Taudien S."/>
            <person name="Taylor T."/>
            <person name="Teague B."/>
            <person name="Thomas K."/>
            <person name="Thorpe A."/>
            <person name="Timms K."/>
            <person name="Tracey A."/>
            <person name="Trevanion S."/>
            <person name="Tromans A.C."/>
            <person name="d'Urso M."/>
            <person name="Verduzco D."/>
            <person name="Villasana D."/>
            <person name="Waldron L."/>
            <person name="Wall M."/>
            <person name="Wang Q."/>
            <person name="Warren J."/>
            <person name="Warry G.L."/>
            <person name="Wei X."/>
            <person name="West A."/>
            <person name="Whitehead S.L."/>
            <person name="Whiteley M.N."/>
            <person name="Wilkinson J.E."/>
            <person name="Willey D.L."/>
            <person name="Williams G."/>
            <person name="Williams L."/>
            <person name="Williamson A."/>
            <person name="Williamson H."/>
            <person name="Wilming L."/>
            <person name="Woodmansey R.L."/>
            <person name="Wray P.W."/>
            <person name="Yen J."/>
            <person name="Zhang J."/>
            <person name="Zhou J."/>
            <person name="Zoghbi H."/>
            <person name="Zorilla S."/>
            <person name="Buck D."/>
            <person name="Reinhardt R."/>
            <person name="Poustka A."/>
            <person name="Rosenthal A."/>
            <person name="Lehrach H."/>
            <person name="Meindl A."/>
            <person name="Minx P.J."/>
            <person name="Hillier L.W."/>
            <person name="Willard H.F."/>
            <person name="Wilson R.K."/>
            <person name="Waterston R.H."/>
            <person name="Rice C.M."/>
            <person name="Vaudin M."/>
            <person name="Coulson A."/>
            <person name="Nelson D.L."/>
            <person name="Weinstock G."/>
            <person name="Sulston J.E."/>
            <person name="Durbin R.M."/>
            <person name="Hubbard T."/>
            <person name="Gibbs R.A."/>
            <person name="Beck S."/>
            <person name="Rogers J."/>
            <person name="Bentley D.R."/>
        </authorList>
    </citation>
    <scope>NUCLEOTIDE SEQUENCE [LARGE SCALE GENOMIC DNA]</scope>
</reference>
<reference key="3">
    <citation type="journal article" date="2004" name="Genome Res.">
        <title>The status, quality, and expansion of the NIH full-length cDNA project: the Mammalian Gene Collection (MGC).</title>
        <authorList>
            <consortium name="The MGC Project Team"/>
        </authorList>
    </citation>
    <scope>NUCLEOTIDE SEQUENCE [LARGE SCALE MRNA] (ISOFORMS 1 AND 2)</scope>
    <source>
        <tissue>Skin</tissue>
    </source>
</reference>
<reference key="4">
    <citation type="journal article" date="2013" name="J. Proteome Res.">
        <title>Toward a comprehensive characterization of a human cancer cell phosphoproteome.</title>
        <authorList>
            <person name="Zhou H."/>
            <person name="Di Palma S."/>
            <person name="Preisinger C."/>
            <person name="Peng M."/>
            <person name="Polat A.N."/>
            <person name="Heck A.J."/>
            <person name="Mohammed S."/>
        </authorList>
    </citation>
    <scope>PHOSPHORYLATION [LARGE SCALE ANALYSIS] AT THR-113 AND THR-116</scope>
    <scope>IDENTIFICATION BY MASS SPECTROMETRY [LARGE SCALE ANALYSIS]</scope>
    <source>
        <tissue>Erythroleukemia</tissue>
    </source>
</reference>
<gene>
    <name type="primary">PAGE5</name>
    <name type="synonym">GAGEE1</name>
</gene>
<feature type="chain" id="PRO_0000247361" description="P antigen family member 5">
    <location>
        <begin position="1"/>
        <end position="130"/>
    </location>
</feature>
<feature type="region of interest" description="Disordered" evidence="1">
    <location>
        <begin position="1"/>
        <end position="88"/>
    </location>
</feature>
<feature type="region of interest" description="Disordered" evidence="1">
    <location>
        <begin position="101"/>
        <end position="130"/>
    </location>
</feature>
<feature type="compositionally biased region" description="Basic and acidic residues" evidence="1">
    <location>
        <begin position="14"/>
        <end position="26"/>
    </location>
</feature>
<feature type="compositionally biased region" description="Polar residues" evidence="1">
    <location>
        <begin position="27"/>
        <end position="42"/>
    </location>
</feature>
<feature type="modified residue" description="Phosphothreonine" evidence="4">
    <location>
        <position position="113"/>
    </location>
</feature>
<feature type="modified residue" description="Phosphothreonine" evidence="4">
    <location>
        <position position="116"/>
    </location>
</feature>
<feature type="splice variant" id="VSP_042547" description="In isoform 2." evidence="2">
    <location>
        <begin position="1"/>
        <end position="20"/>
    </location>
</feature>
<name>PAGE5_HUMAN</name>
<sequence length="130" mass="14046">MQAPWAGNRGWAGTREEVRDMSEHVTRSQSSERGNDQESSQPVGPVIVQQPTEEKRQEEEPPTDNQGIAPSGEIKNEGAPAVQGTDVEAFQQELALLKIEDAPGDGPDVREGTLPTFDPTKVLEAGEGQL</sequence>
<protein>
    <recommendedName>
        <fullName>P antigen family member 5</fullName>
        <shortName>PAGE-5</shortName>
    </recommendedName>
    <alternativeName>
        <fullName>Cancer/testis antigen 16.1</fullName>
        <shortName>CT16.1</shortName>
    </alternativeName>
    <alternativeName>
        <fullName>G antigen family E member 1</fullName>
    </alternativeName>
    <alternativeName>
        <fullName>Prostate-associated gene 5 protein</fullName>
    </alternativeName>
</protein>
<dbReference type="EMBL" id="AJ344352">
    <property type="protein sequence ID" value="CAC87642.1"/>
    <property type="molecule type" value="mRNA"/>
</dbReference>
<dbReference type="EMBL" id="AL158819">
    <property type="status" value="NOT_ANNOTATED_CDS"/>
    <property type="molecule type" value="Genomic_DNA"/>
</dbReference>
<dbReference type="EMBL" id="BC009230">
    <property type="protein sequence ID" value="AAH09230.2"/>
    <property type="molecule type" value="mRNA"/>
</dbReference>
<dbReference type="EMBL" id="BC110803">
    <property type="protein sequence ID" value="AAI10804.2"/>
    <property type="molecule type" value="mRNA"/>
</dbReference>
<dbReference type="CCDS" id="CCDS14368.1">
    <molecule id="Q96GU1-1"/>
</dbReference>
<dbReference type="CCDS" id="CCDS35306.1">
    <molecule id="Q96GU1-2"/>
</dbReference>
<dbReference type="RefSeq" id="NP_001013453.1">
    <molecule id="Q96GU1-2"/>
    <property type="nucleotide sequence ID" value="NM_001013435.3"/>
</dbReference>
<dbReference type="RefSeq" id="NP_569734.2">
    <molecule id="Q96GU1-1"/>
    <property type="nucleotide sequence ID" value="NM_130467.4"/>
</dbReference>
<dbReference type="BioGRID" id="124758">
    <property type="interactions" value="14"/>
</dbReference>
<dbReference type="IntAct" id="Q96GU1">
    <property type="interactions" value="9"/>
</dbReference>
<dbReference type="STRING" id="9606.ENSP00000289619"/>
<dbReference type="iPTMnet" id="Q96GU1"/>
<dbReference type="PhosphoSitePlus" id="Q96GU1"/>
<dbReference type="BioMuta" id="PAGE5"/>
<dbReference type="DMDM" id="74751892"/>
<dbReference type="MassIVE" id="Q96GU1"/>
<dbReference type="PaxDb" id="9606-ENSP00000289619"/>
<dbReference type="PeptideAtlas" id="Q96GU1"/>
<dbReference type="ProteomicsDB" id="76666">
    <molecule id="Q96GU1-1"/>
</dbReference>
<dbReference type="ProteomicsDB" id="76667">
    <molecule id="Q96GU1-2"/>
</dbReference>
<dbReference type="Pumba" id="Q96GU1"/>
<dbReference type="Antibodypedia" id="64478">
    <property type="antibodies" value="71 antibodies from 14 providers"/>
</dbReference>
<dbReference type="DNASU" id="90737"/>
<dbReference type="Ensembl" id="ENST00000289619.9">
    <molecule id="Q96GU1-1"/>
    <property type="protein sequence ID" value="ENSP00000289619.5"/>
    <property type="gene ID" value="ENSG00000158639.13"/>
</dbReference>
<dbReference type="Ensembl" id="ENST00000374955.8">
    <molecule id="Q96GU1-2"/>
    <property type="protein sequence ID" value="ENSP00000364093.3"/>
    <property type="gene ID" value="ENSG00000158639.13"/>
</dbReference>
<dbReference type="GeneID" id="90737"/>
<dbReference type="KEGG" id="hsa:90737"/>
<dbReference type="MANE-Select" id="ENST00000374955.8">
    <molecule id="Q96GU1-2"/>
    <property type="protein sequence ID" value="ENSP00000364093.3"/>
    <property type="RefSeq nucleotide sequence ID" value="NM_001013435.3"/>
    <property type="RefSeq protein sequence ID" value="NP_001013453.1"/>
</dbReference>
<dbReference type="UCSC" id="uc004duj.4">
    <molecule id="Q96GU1-1"/>
    <property type="organism name" value="human"/>
</dbReference>
<dbReference type="AGR" id="HGNC:29992"/>
<dbReference type="CTD" id="90737"/>
<dbReference type="DisGeNET" id="90737"/>
<dbReference type="GeneCards" id="PAGE5"/>
<dbReference type="HGNC" id="HGNC:29992">
    <property type="gene designation" value="PAGE5"/>
</dbReference>
<dbReference type="HPA" id="ENSG00000158639">
    <property type="expression patterns" value="Tissue enriched (testis)"/>
</dbReference>
<dbReference type="MIM" id="301009">
    <property type="type" value="gene"/>
</dbReference>
<dbReference type="neXtProt" id="NX_Q96GU1"/>
<dbReference type="OpenTargets" id="ENSG00000158639"/>
<dbReference type="PharmGKB" id="PA142671204"/>
<dbReference type="VEuPathDB" id="HostDB:ENSG00000158639"/>
<dbReference type="eggNOG" id="ENOG502TF3A">
    <property type="taxonomic scope" value="Eukaryota"/>
</dbReference>
<dbReference type="GeneTree" id="ENSGT00940000153097"/>
<dbReference type="InParanoid" id="Q96GU1"/>
<dbReference type="OMA" id="KYEHVRT"/>
<dbReference type="OrthoDB" id="9538520at2759"/>
<dbReference type="PAN-GO" id="Q96GU1">
    <property type="GO annotations" value="0 GO annotations based on evolutionary models"/>
</dbReference>
<dbReference type="PhylomeDB" id="Q96GU1"/>
<dbReference type="TreeFam" id="TF340669"/>
<dbReference type="PathwayCommons" id="Q96GU1"/>
<dbReference type="SignaLink" id="Q96GU1"/>
<dbReference type="BioGRID-ORCS" id="90737">
    <property type="hits" value="14 hits in 764 CRISPR screens"/>
</dbReference>
<dbReference type="GenomeRNAi" id="90737"/>
<dbReference type="Pharos" id="Q96GU1">
    <property type="development level" value="Tbio"/>
</dbReference>
<dbReference type="PRO" id="PR:Q96GU1"/>
<dbReference type="Proteomes" id="UP000005640">
    <property type="component" value="Chromosome X"/>
</dbReference>
<dbReference type="RNAct" id="Q96GU1">
    <property type="molecule type" value="protein"/>
</dbReference>
<dbReference type="Bgee" id="ENSG00000158639">
    <property type="expression patterns" value="Expressed in male germ line stem cell (sensu Vertebrata) in testis and 83 other cell types or tissues"/>
</dbReference>
<dbReference type="ExpressionAtlas" id="Q96GU1">
    <property type="expression patterns" value="baseline and differential"/>
</dbReference>
<dbReference type="DisProt" id="DP01473"/>
<dbReference type="InterPro" id="IPR031320">
    <property type="entry name" value="GAGE"/>
</dbReference>
<dbReference type="InterPro" id="IPR008625">
    <property type="entry name" value="GAGE_fam"/>
</dbReference>
<dbReference type="PANTHER" id="PTHR14047:SF37">
    <property type="entry name" value="P ANTIGEN FAMILY MEMBER 5"/>
    <property type="match status" value="1"/>
</dbReference>
<dbReference type="PANTHER" id="PTHR14047">
    <property type="entry name" value="P ANTIGEN FAMILY MEMBER 5-RELATED"/>
    <property type="match status" value="1"/>
</dbReference>
<dbReference type="Pfam" id="PF05831">
    <property type="entry name" value="GAGE"/>
    <property type="match status" value="1"/>
</dbReference>
<dbReference type="SMART" id="SM01379">
    <property type="entry name" value="GAGE"/>
    <property type="match status" value="1"/>
</dbReference>
<organism>
    <name type="scientific">Homo sapiens</name>
    <name type="common">Human</name>
    <dbReference type="NCBI Taxonomy" id="9606"/>
    <lineage>
        <taxon>Eukaryota</taxon>
        <taxon>Metazoa</taxon>
        <taxon>Chordata</taxon>
        <taxon>Craniata</taxon>
        <taxon>Vertebrata</taxon>
        <taxon>Euteleostomi</taxon>
        <taxon>Mammalia</taxon>
        <taxon>Eutheria</taxon>
        <taxon>Euarchontoglires</taxon>
        <taxon>Primates</taxon>
        <taxon>Haplorrhini</taxon>
        <taxon>Catarrhini</taxon>
        <taxon>Hominidae</taxon>
        <taxon>Homo</taxon>
    </lineage>
</organism>